<protein>
    <recommendedName>
        <fullName evidence="1">Ribosome maturation factor RimP</fullName>
    </recommendedName>
</protein>
<proteinExistence type="inferred from homology"/>
<dbReference type="EMBL" id="CP000024">
    <property type="protein sequence ID" value="AAV61943.1"/>
    <property type="molecule type" value="Genomic_DNA"/>
</dbReference>
<dbReference type="SMR" id="Q5M1C3"/>
<dbReference type="KEGG" id="stc:str0340"/>
<dbReference type="HOGENOM" id="CLU_070525_2_0_9"/>
<dbReference type="GO" id="GO:0005829">
    <property type="term" value="C:cytosol"/>
    <property type="evidence" value="ECO:0007669"/>
    <property type="project" value="TreeGrafter"/>
</dbReference>
<dbReference type="GO" id="GO:0000028">
    <property type="term" value="P:ribosomal small subunit assembly"/>
    <property type="evidence" value="ECO:0007669"/>
    <property type="project" value="TreeGrafter"/>
</dbReference>
<dbReference type="GO" id="GO:0006412">
    <property type="term" value="P:translation"/>
    <property type="evidence" value="ECO:0007669"/>
    <property type="project" value="TreeGrafter"/>
</dbReference>
<dbReference type="CDD" id="cd01734">
    <property type="entry name" value="YlxS_C"/>
    <property type="match status" value="1"/>
</dbReference>
<dbReference type="Gene3D" id="2.30.30.180">
    <property type="entry name" value="Ribosome maturation factor RimP, C-terminal domain"/>
    <property type="match status" value="1"/>
</dbReference>
<dbReference type="Gene3D" id="3.30.300.70">
    <property type="entry name" value="RimP-like superfamily, N-terminal"/>
    <property type="match status" value="1"/>
</dbReference>
<dbReference type="HAMAP" id="MF_01077">
    <property type="entry name" value="RimP"/>
    <property type="match status" value="1"/>
</dbReference>
<dbReference type="InterPro" id="IPR003728">
    <property type="entry name" value="Ribosome_maturation_RimP"/>
</dbReference>
<dbReference type="InterPro" id="IPR028998">
    <property type="entry name" value="RimP_C"/>
</dbReference>
<dbReference type="InterPro" id="IPR036847">
    <property type="entry name" value="RimP_C_sf"/>
</dbReference>
<dbReference type="InterPro" id="IPR028989">
    <property type="entry name" value="RimP_N"/>
</dbReference>
<dbReference type="InterPro" id="IPR035956">
    <property type="entry name" value="RimP_N_sf"/>
</dbReference>
<dbReference type="NCBIfam" id="NF000928">
    <property type="entry name" value="PRK00092.1-2"/>
    <property type="match status" value="1"/>
</dbReference>
<dbReference type="PANTHER" id="PTHR33867">
    <property type="entry name" value="RIBOSOME MATURATION FACTOR RIMP"/>
    <property type="match status" value="1"/>
</dbReference>
<dbReference type="PANTHER" id="PTHR33867:SF1">
    <property type="entry name" value="RIBOSOME MATURATION FACTOR RIMP"/>
    <property type="match status" value="1"/>
</dbReference>
<dbReference type="Pfam" id="PF17384">
    <property type="entry name" value="DUF150_C"/>
    <property type="match status" value="1"/>
</dbReference>
<dbReference type="Pfam" id="PF02576">
    <property type="entry name" value="RimP_N"/>
    <property type="match status" value="1"/>
</dbReference>
<dbReference type="SUPFAM" id="SSF74942">
    <property type="entry name" value="YhbC-like, C-terminal domain"/>
    <property type="match status" value="1"/>
</dbReference>
<dbReference type="SUPFAM" id="SSF75420">
    <property type="entry name" value="YhbC-like, N-terminal domain"/>
    <property type="match status" value="1"/>
</dbReference>
<name>RIMP_STRT1</name>
<comment type="function">
    <text evidence="1">Required for maturation of 30S ribosomal subunits.</text>
</comment>
<comment type="subcellular location">
    <subcellularLocation>
        <location evidence="1">Cytoplasm</location>
    </subcellularLocation>
</comment>
<comment type="similarity">
    <text evidence="1">Belongs to the RimP family.</text>
</comment>
<feature type="chain" id="PRO_0000229284" description="Ribosome maturation factor RimP">
    <location>
        <begin position="1"/>
        <end position="163"/>
    </location>
</feature>
<gene>
    <name evidence="1" type="primary">rimP</name>
    <name type="ordered locus">str0340</name>
</gene>
<evidence type="ECO:0000255" key="1">
    <source>
        <dbReference type="HAMAP-Rule" id="MF_01077"/>
    </source>
</evidence>
<keyword id="KW-0963">Cytoplasm</keyword>
<keyword id="KW-0690">Ribosome biogenesis</keyword>
<sequence>MCKEVIMSQKIIDLVTAVVAPAIPDPYELVDIEYEKIGSDYILSVLIDKPGGITVEDTADLTEIISPLLDTIQPDPFPDQYMLEVSSPGLERPLKTKEALKNAVGQYINVSLYKAIDKIKIFQGDLLAFDGETLTIDYLDKTRHKTVEIPYQTVAKARLAVKL</sequence>
<accession>Q5M1C3</accession>
<reference key="1">
    <citation type="journal article" date="2004" name="Nat. Biotechnol.">
        <title>Complete sequence and comparative genome analysis of the dairy bacterium Streptococcus thermophilus.</title>
        <authorList>
            <person name="Bolotin A."/>
            <person name="Quinquis B."/>
            <person name="Renault P."/>
            <person name="Sorokin A."/>
            <person name="Ehrlich S.D."/>
            <person name="Kulakauskas S."/>
            <person name="Lapidus A."/>
            <person name="Goltsman E."/>
            <person name="Mazur M."/>
            <person name="Pusch G.D."/>
            <person name="Fonstein M."/>
            <person name="Overbeek R."/>
            <person name="Kyprides N."/>
            <person name="Purnelle B."/>
            <person name="Prozzi D."/>
            <person name="Ngui K."/>
            <person name="Masuy D."/>
            <person name="Hancy F."/>
            <person name="Burteau S."/>
            <person name="Boutry M."/>
            <person name="Delcour J."/>
            <person name="Goffeau A."/>
            <person name="Hols P."/>
        </authorList>
    </citation>
    <scope>NUCLEOTIDE SEQUENCE [LARGE SCALE GENOMIC DNA]</scope>
    <source>
        <strain>CNRZ 1066</strain>
    </source>
</reference>
<organism>
    <name type="scientific">Streptococcus thermophilus (strain CNRZ 1066)</name>
    <dbReference type="NCBI Taxonomy" id="299768"/>
    <lineage>
        <taxon>Bacteria</taxon>
        <taxon>Bacillati</taxon>
        <taxon>Bacillota</taxon>
        <taxon>Bacilli</taxon>
        <taxon>Lactobacillales</taxon>
        <taxon>Streptococcaceae</taxon>
        <taxon>Streptococcus</taxon>
    </lineage>
</organism>